<protein>
    <recommendedName>
        <fullName>AMSH-like ubiquitin thioesterase 1</fullName>
        <ecNumber>3.4.19.-</ecNumber>
    </recommendedName>
    <alternativeName>
        <fullName>Deubiquitinating enzyme AMSH1</fullName>
    </alternativeName>
</protein>
<dbReference type="EC" id="3.4.19.-"/>
<dbReference type="EMBL" id="AC073555">
    <property type="protein sequence ID" value="AAG60133.1"/>
    <property type="status" value="ALT_SEQ"/>
    <property type="molecule type" value="Genomic_DNA"/>
</dbReference>
<dbReference type="EMBL" id="CP002684">
    <property type="protein sequence ID" value="AEE32350.1"/>
    <property type="molecule type" value="Genomic_DNA"/>
</dbReference>
<dbReference type="EMBL" id="AY072212">
    <property type="protein sequence ID" value="AAL60033.1"/>
    <property type="molecule type" value="mRNA"/>
</dbReference>
<dbReference type="EMBL" id="AY096591">
    <property type="protein sequence ID" value="AAM20241.1"/>
    <property type="molecule type" value="mRNA"/>
</dbReference>
<dbReference type="EMBL" id="AY084581">
    <property type="protein sequence ID" value="AAM61146.1"/>
    <property type="molecule type" value="mRNA"/>
</dbReference>
<dbReference type="RefSeq" id="NP_564533.1">
    <property type="nucleotide sequence ID" value="NM_103774.4"/>
</dbReference>
<dbReference type="SMR" id="Q8VYB5"/>
<dbReference type="BioGRID" id="26526">
    <property type="interactions" value="3"/>
</dbReference>
<dbReference type="FunCoup" id="Q8VYB5">
    <property type="interactions" value="3344"/>
</dbReference>
<dbReference type="STRING" id="3702.Q8VYB5"/>
<dbReference type="MEROPS" id="M67.A04"/>
<dbReference type="PaxDb" id="3702-AT1G48790.1"/>
<dbReference type="ProteomicsDB" id="244421"/>
<dbReference type="EnsemblPlants" id="AT1G48790.1">
    <property type="protein sequence ID" value="AT1G48790.1"/>
    <property type="gene ID" value="AT1G48790"/>
</dbReference>
<dbReference type="GeneID" id="841301"/>
<dbReference type="Gramene" id="AT1G48790.1">
    <property type="protein sequence ID" value="AT1G48790.1"/>
    <property type="gene ID" value="AT1G48790"/>
</dbReference>
<dbReference type="KEGG" id="ath:AT1G48790"/>
<dbReference type="Araport" id="AT1G48790"/>
<dbReference type="TAIR" id="AT1G48790">
    <property type="gene designation" value="AMSH1"/>
</dbReference>
<dbReference type="eggNOG" id="KOG2880">
    <property type="taxonomic scope" value="Eukaryota"/>
</dbReference>
<dbReference type="HOGENOM" id="CLU_023304_5_1_1"/>
<dbReference type="InParanoid" id="Q8VYB5"/>
<dbReference type="OMA" id="GLHGQWQ"/>
<dbReference type="OrthoDB" id="3640at2759"/>
<dbReference type="PhylomeDB" id="Q8VYB5"/>
<dbReference type="PRO" id="PR:Q8VYB5"/>
<dbReference type="Proteomes" id="UP000006548">
    <property type="component" value="Chromosome 1"/>
</dbReference>
<dbReference type="ExpressionAtlas" id="Q8VYB5">
    <property type="expression patterns" value="baseline and differential"/>
</dbReference>
<dbReference type="GO" id="GO:0005737">
    <property type="term" value="C:cytoplasm"/>
    <property type="evidence" value="ECO:0007669"/>
    <property type="project" value="UniProtKB-SubCell"/>
</dbReference>
<dbReference type="GO" id="GO:0016020">
    <property type="term" value="C:membrane"/>
    <property type="evidence" value="ECO:0007669"/>
    <property type="project" value="UniProtKB-SubCell"/>
</dbReference>
<dbReference type="GO" id="GO:0061578">
    <property type="term" value="F:K63-linked deubiquitinase activity"/>
    <property type="evidence" value="ECO:0007669"/>
    <property type="project" value="InterPro"/>
</dbReference>
<dbReference type="GO" id="GO:0046872">
    <property type="term" value="F:metal ion binding"/>
    <property type="evidence" value="ECO:0007669"/>
    <property type="project" value="UniProtKB-KW"/>
</dbReference>
<dbReference type="GO" id="GO:0140492">
    <property type="term" value="F:metal-dependent deubiquitinase activity"/>
    <property type="evidence" value="ECO:0007669"/>
    <property type="project" value="InterPro"/>
</dbReference>
<dbReference type="GO" id="GO:0071108">
    <property type="term" value="P:protein K48-linked deubiquitination"/>
    <property type="evidence" value="ECO:0000250"/>
    <property type="project" value="UniProtKB"/>
</dbReference>
<dbReference type="GO" id="GO:0070536">
    <property type="term" value="P:protein K63-linked deubiquitination"/>
    <property type="evidence" value="ECO:0000250"/>
    <property type="project" value="UniProtKB"/>
</dbReference>
<dbReference type="GO" id="GO:0006508">
    <property type="term" value="P:proteolysis"/>
    <property type="evidence" value="ECO:0007669"/>
    <property type="project" value="UniProtKB-KW"/>
</dbReference>
<dbReference type="CDD" id="cd08066">
    <property type="entry name" value="MPN_AMSH_like"/>
    <property type="match status" value="1"/>
</dbReference>
<dbReference type="FunFam" id="1.20.58.80:FF:000020">
    <property type="entry name" value="AMSH-like ubiquitin thioesterase 3"/>
    <property type="match status" value="1"/>
</dbReference>
<dbReference type="FunFam" id="3.40.140.10:FF:000024">
    <property type="entry name" value="AMSH-like ubiquitin thioesterase 3"/>
    <property type="match status" value="1"/>
</dbReference>
<dbReference type="Gene3D" id="3.40.140.10">
    <property type="entry name" value="Cytidine Deaminase, domain 2"/>
    <property type="match status" value="1"/>
</dbReference>
<dbReference type="Gene3D" id="1.20.58.80">
    <property type="entry name" value="Phosphotransferase system, lactose/cellobiose-type IIA subunit"/>
    <property type="match status" value="1"/>
</dbReference>
<dbReference type="InterPro" id="IPR000555">
    <property type="entry name" value="JAMM/MPN+_dom"/>
</dbReference>
<dbReference type="InterPro" id="IPR037518">
    <property type="entry name" value="MPN"/>
</dbReference>
<dbReference type="InterPro" id="IPR044098">
    <property type="entry name" value="STAMBP/STALP-like_MPN"/>
</dbReference>
<dbReference type="InterPro" id="IPR015063">
    <property type="entry name" value="USP8_dimer"/>
</dbReference>
<dbReference type="PANTHER" id="PTHR12947">
    <property type="entry name" value="AMSH-LIKE PROTEASE"/>
    <property type="match status" value="1"/>
</dbReference>
<dbReference type="PANTHER" id="PTHR12947:SF19">
    <property type="entry name" value="AMSH-LIKE UBIQUITIN THIOESTERASE 1"/>
    <property type="match status" value="1"/>
</dbReference>
<dbReference type="Pfam" id="PF01398">
    <property type="entry name" value="JAB"/>
    <property type="match status" value="1"/>
</dbReference>
<dbReference type="Pfam" id="PF08969">
    <property type="entry name" value="USP8_dimer"/>
    <property type="match status" value="1"/>
</dbReference>
<dbReference type="SMART" id="SM00232">
    <property type="entry name" value="JAB_MPN"/>
    <property type="match status" value="1"/>
</dbReference>
<dbReference type="SUPFAM" id="SSF102712">
    <property type="entry name" value="JAB1/MPN domain"/>
    <property type="match status" value="1"/>
</dbReference>
<dbReference type="SUPFAM" id="SSF140856">
    <property type="entry name" value="USP8 N-terminal domain-like"/>
    <property type="match status" value="1"/>
</dbReference>
<dbReference type="PROSITE" id="PS50249">
    <property type="entry name" value="MPN"/>
    <property type="match status" value="1"/>
</dbReference>
<organism>
    <name type="scientific">Arabidopsis thaliana</name>
    <name type="common">Mouse-ear cress</name>
    <dbReference type="NCBI Taxonomy" id="3702"/>
    <lineage>
        <taxon>Eukaryota</taxon>
        <taxon>Viridiplantae</taxon>
        <taxon>Streptophyta</taxon>
        <taxon>Embryophyta</taxon>
        <taxon>Tracheophyta</taxon>
        <taxon>Spermatophyta</taxon>
        <taxon>Magnoliopsida</taxon>
        <taxon>eudicotyledons</taxon>
        <taxon>Gunneridae</taxon>
        <taxon>Pentapetalae</taxon>
        <taxon>rosids</taxon>
        <taxon>malvids</taxon>
        <taxon>Brassicales</taxon>
        <taxon>Brassicaceae</taxon>
        <taxon>Camelineae</taxon>
        <taxon>Arabidopsis</taxon>
    </lineage>
</organism>
<sequence>MGSSFETIDIATSARRIGVDNRISLKFYFRIADNILKQANIFRAEKNVIDLYVMLLRFSSLALETIPSHRDYRTSLKSNKEYLRMRLLDVLTELEKLKPVVQQRIDELYPKLKPRYNVQAHPANGSLGWSSAVKPSFNSYDHAKVRNPPGHNSGYMGSRGQQFLNAAPLEERFRKMSVNFRPNEETLSKHSILGPGGLSAQWQPPKYDTKVQYPSNIDFSPVVIPSFQQLVDSKPMITNGSNDEPEKPIVEPSVASNEKIQKNYTEELSSMISFEEPESVNENNLIRQPSPPPVLAEVQDLVPALCPEVREPECMIENSLPDESLRSESPLELHIATSMMDTFMRLAKSNTKKNLETCGILAGSLKNRKFYITALIIPKQESTSDSCQATNEEEIFEVQDKQSLFPLGWIHTHPTQSCFMSSIDVHTHYSYQIMLPEAVAIVMAPQDSSRNHGIFRLTTPGGMTVIRNCDRRGFHAHSSPEDGGPIYNTCKEVYMNPNLKFDVIDLR</sequence>
<keyword id="KW-0963">Cytoplasm</keyword>
<keyword id="KW-0378">Hydrolase</keyword>
<keyword id="KW-0472">Membrane</keyword>
<keyword id="KW-0479">Metal-binding</keyword>
<keyword id="KW-0482">Metalloprotease</keyword>
<keyword id="KW-0645">Protease</keyword>
<keyword id="KW-1185">Reference proteome</keyword>
<keyword id="KW-0833">Ubl conjugation pathway</keyword>
<keyword id="KW-0862">Zinc</keyword>
<accession>Q8VYB5</accession>
<accession>Q8LFY1</accession>
<accession>Q9C747</accession>
<proteinExistence type="evidence at transcript level"/>
<gene>
    <name type="primary">AMSH1</name>
    <name type="ordered locus">At1g48790</name>
    <name type="ORF">F11I4.4</name>
</gene>
<comment type="function">
    <text evidence="1">Zinc metalloprotease that cleaves 'Lys-48'- and 'Lys-63'-linked polyubiquitin chains.</text>
</comment>
<comment type="cofactor">
    <cofactor evidence="1">
        <name>Zn(2+)</name>
        <dbReference type="ChEBI" id="CHEBI:29105"/>
    </cofactor>
    <text evidence="1">Binds 2 Zn(2+) ions per subunit.</text>
</comment>
<comment type="subcellular location">
    <subcellularLocation>
        <location evidence="1">Membrane</location>
        <topology evidence="1">Peripheral membrane protein</topology>
    </subcellularLocation>
    <subcellularLocation>
        <location evidence="1">Cytoplasm</location>
    </subcellularLocation>
</comment>
<comment type="domain">
    <text evidence="1">The JAMM motif is essential for the protease activity.</text>
</comment>
<comment type="similarity">
    <text evidence="3">Belongs to the peptidase M67C family.</text>
</comment>
<comment type="sequence caution" evidence="3">
    <conflict type="erroneous gene model prediction">
        <sequence resource="EMBL-CDS" id="AAG60133"/>
    </conflict>
</comment>
<feature type="chain" id="PRO_0000397098" description="AMSH-like ubiquitin thioesterase 1">
    <location>
        <begin position="1"/>
        <end position="507"/>
    </location>
</feature>
<feature type="domain" description="MPN" evidence="2">
    <location>
        <begin position="333"/>
        <end position="463"/>
    </location>
</feature>
<feature type="short sequence motif" description="JAMM motif" evidence="2">
    <location>
        <begin position="411"/>
        <end position="424"/>
    </location>
</feature>
<feature type="binding site" evidence="2">
    <location>
        <position position="411"/>
    </location>
    <ligand>
        <name>Zn(2+)</name>
        <dbReference type="ChEBI" id="CHEBI:29105"/>
        <label>1</label>
        <note>catalytic</note>
    </ligand>
</feature>
<feature type="binding site" evidence="2">
    <location>
        <position position="413"/>
    </location>
    <ligand>
        <name>Zn(2+)</name>
        <dbReference type="ChEBI" id="CHEBI:29105"/>
        <label>1</label>
        <note>catalytic</note>
    </ligand>
</feature>
<feature type="binding site" evidence="2">
    <location>
        <position position="424"/>
    </location>
    <ligand>
        <name>Zn(2+)</name>
        <dbReference type="ChEBI" id="CHEBI:29105"/>
        <label>1</label>
        <note>catalytic</note>
    </ligand>
</feature>
<feature type="binding site" evidence="1">
    <location>
        <position position="426"/>
    </location>
    <ligand>
        <name>Zn(2+)</name>
        <dbReference type="ChEBI" id="CHEBI:29105"/>
        <label>2</label>
    </ligand>
</feature>
<feature type="binding site" evidence="1">
    <location>
        <position position="469"/>
    </location>
    <ligand>
        <name>Zn(2+)</name>
        <dbReference type="ChEBI" id="CHEBI:29105"/>
        <label>2</label>
    </ligand>
</feature>
<feature type="binding site" evidence="1">
    <location>
        <position position="475"/>
    </location>
    <ligand>
        <name>Zn(2+)</name>
        <dbReference type="ChEBI" id="CHEBI:29105"/>
        <label>2</label>
    </ligand>
</feature>
<feature type="binding site" evidence="1">
    <location>
        <position position="477"/>
    </location>
    <ligand>
        <name>Zn(2+)</name>
        <dbReference type="ChEBI" id="CHEBI:29105"/>
        <label>2</label>
    </ligand>
</feature>
<feature type="site" description="Indirect zinc-binding" evidence="1">
    <location>
        <position position="356"/>
    </location>
</feature>
<feature type="sequence conflict" description="In Ref. 4; AAM61146." evidence="3" ref="4">
    <original>A</original>
    <variation>G</variation>
    <location>
        <position position="11"/>
    </location>
</feature>
<reference key="1">
    <citation type="journal article" date="2000" name="Nature">
        <title>Sequence and analysis of chromosome 1 of the plant Arabidopsis thaliana.</title>
        <authorList>
            <person name="Theologis A."/>
            <person name="Ecker J.R."/>
            <person name="Palm C.J."/>
            <person name="Federspiel N.A."/>
            <person name="Kaul S."/>
            <person name="White O."/>
            <person name="Alonso J."/>
            <person name="Altafi H."/>
            <person name="Araujo R."/>
            <person name="Bowman C.L."/>
            <person name="Brooks S.Y."/>
            <person name="Buehler E."/>
            <person name="Chan A."/>
            <person name="Chao Q."/>
            <person name="Chen H."/>
            <person name="Cheuk R.F."/>
            <person name="Chin C.W."/>
            <person name="Chung M.K."/>
            <person name="Conn L."/>
            <person name="Conway A.B."/>
            <person name="Conway A.R."/>
            <person name="Creasy T.H."/>
            <person name="Dewar K."/>
            <person name="Dunn P."/>
            <person name="Etgu P."/>
            <person name="Feldblyum T.V."/>
            <person name="Feng J.-D."/>
            <person name="Fong B."/>
            <person name="Fujii C.Y."/>
            <person name="Gill J.E."/>
            <person name="Goldsmith A.D."/>
            <person name="Haas B."/>
            <person name="Hansen N.F."/>
            <person name="Hughes B."/>
            <person name="Huizar L."/>
            <person name="Hunter J.L."/>
            <person name="Jenkins J."/>
            <person name="Johnson-Hopson C."/>
            <person name="Khan S."/>
            <person name="Khaykin E."/>
            <person name="Kim C.J."/>
            <person name="Koo H.L."/>
            <person name="Kremenetskaia I."/>
            <person name="Kurtz D.B."/>
            <person name="Kwan A."/>
            <person name="Lam B."/>
            <person name="Langin-Hooper S."/>
            <person name="Lee A."/>
            <person name="Lee J.M."/>
            <person name="Lenz C.A."/>
            <person name="Li J.H."/>
            <person name="Li Y.-P."/>
            <person name="Lin X."/>
            <person name="Liu S.X."/>
            <person name="Liu Z.A."/>
            <person name="Luros J.S."/>
            <person name="Maiti R."/>
            <person name="Marziali A."/>
            <person name="Militscher J."/>
            <person name="Miranda M."/>
            <person name="Nguyen M."/>
            <person name="Nierman W.C."/>
            <person name="Osborne B.I."/>
            <person name="Pai G."/>
            <person name="Peterson J."/>
            <person name="Pham P.K."/>
            <person name="Rizzo M."/>
            <person name="Rooney T."/>
            <person name="Rowley D."/>
            <person name="Sakano H."/>
            <person name="Salzberg S.L."/>
            <person name="Schwartz J.R."/>
            <person name="Shinn P."/>
            <person name="Southwick A.M."/>
            <person name="Sun H."/>
            <person name="Tallon L.J."/>
            <person name="Tambunga G."/>
            <person name="Toriumi M.J."/>
            <person name="Town C.D."/>
            <person name="Utterback T."/>
            <person name="Van Aken S."/>
            <person name="Vaysberg M."/>
            <person name="Vysotskaia V.S."/>
            <person name="Walker M."/>
            <person name="Wu D."/>
            <person name="Yu G."/>
            <person name="Fraser C.M."/>
            <person name="Venter J.C."/>
            <person name="Davis R.W."/>
        </authorList>
    </citation>
    <scope>NUCLEOTIDE SEQUENCE [LARGE SCALE GENOMIC DNA]</scope>
    <source>
        <strain>cv. Columbia</strain>
    </source>
</reference>
<reference key="2">
    <citation type="journal article" date="2017" name="Plant J.">
        <title>Araport11: a complete reannotation of the Arabidopsis thaliana reference genome.</title>
        <authorList>
            <person name="Cheng C.Y."/>
            <person name="Krishnakumar V."/>
            <person name="Chan A.P."/>
            <person name="Thibaud-Nissen F."/>
            <person name="Schobel S."/>
            <person name="Town C.D."/>
        </authorList>
    </citation>
    <scope>GENOME REANNOTATION</scope>
    <source>
        <strain>cv. Columbia</strain>
    </source>
</reference>
<reference key="3">
    <citation type="journal article" date="2003" name="Science">
        <title>Empirical analysis of transcriptional activity in the Arabidopsis genome.</title>
        <authorList>
            <person name="Yamada K."/>
            <person name="Lim J."/>
            <person name="Dale J.M."/>
            <person name="Chen H."/>
            <person name="Shinn P."/>
            <person name="Palm C.J."/>
            <person name="Southwick A.M."/>
            <person name="Wu H.C."/>
            <person name="Kim C.J."/>
            <person name="Nguyen M."/>
            <person name="Pham P.K."/>
            <person name="Cheuk R.F."/>
            <person name="Karlin-Newmann G."/>
            <person name="Liu S.X."/>
            <person name="Lam B."/>
            <person name="Sakano H."/>
            <person name="Wu T."/>
            <person name="Yu G."/>
            <person name="Miranda M."/>
            <person name="Quach H.L."/>
            <person name="Tripp M."/>
            <person name="Chang C.H."/>
            <person name="Lee J.M."/>
            <person name="Toriumi M.J."/>
            <person name="Chan M.M."/>
            <person name="Tang C.C."/>
            <person name="Onodera C.S."/>
            <person name="Deng J.M."/>
            <person name="Akiyama K."/>
            <person name="Ansari Y."/>
            <person name="Arakawa T."/>
            <person name="Banh J."/>
            <person name="Banno F."/>
            <person name="Bowser L."/>
            <person name="Brooks S.Y."/>
            <person name="Carninci P."/>
            <person name="Chao Q."/>
            <person name="Choy N."/>
            <person name="Enju A."/>
            <person name="Goldsmith A.D."/>
            <person name="Gurjal M."/>
            <person name="Hansen N.F."/>
            <person name="Hayashizaki Y."/>
            <person name="Johnson-Hopson C."/>
            <person name="Hsuan V.W."/>
            <person name="Iida K."/>
            <person name="Karnes M."/>
            <person name="Khan S."/>
            <person name="Koesema E."/>
            <person name="Ishida J."/>
            <person name="Jiang P.X."/>
            <person name="Jones T."/>
            <person name="Kawai J."/>
            <person name="Kamiya A."/>
            <person name="Meyers C."/>
            <person name="Nakajima M."/>
            <person name="Narusaka M."/>
            <person name="Seki M."/>
            <person name="Sakurai T."/>
            <person name="Satou M."/>
            <person name="Tamse R."/>
            <person name="Vaysberg M."/>
            <person name="Wallender E.K."/>
            <person name="Wong C."/>
            <person name="Yamamura Y."/>
            <person name="Yuan S."/>
            <person name="Shinozaki K."/>
            <person name="Davis R.W."/>
            <person name="Theologis A."/>
            <person name="Ecker J.R."/>
        </authorList>
    </citation>
    <scope>NUCLEOTIDE SEQUENCE [LARGE SCALE MRNA]</scope>
    <source>
        <strain>cv. Columbia</strain>
    </source>
</reference>
<reference key="4">
    <citation type="submission" date="2002-03" db="EMBL/GenBank/DDBJ databases">
        <title>Full-length cDNA from Arabidopsis thaliana.</title>
        <authorList>
            <person name="Brover V.V."/>
            <person name="Troukhan M.E."/>
            <person name="Alexandrov N.A."/>
            <person name="Lu Y.-P."/>
            <person name="Flavell R.B."/>
            <person name="Feldmann K.A."/>
        </authorList>
    </citation>
    <scope>NUCLEOTIDE SEQUENCE [LARGE SCALE MRNA]</scope>
</reference>
<reference key="5">
    <citation type="journal article" date="2010" name="Plant Cell">
        <title>The deubiquitinating enzyme AMSH3 is required for intracellular trafficking and vacuole biogenesis in Arabidopsis thaliana.</title>
        <authorList>
            <person name="Isono E."/>
            <person name="Katsiarimpa A."/>
            <person name="Mueller I.K."/>
            <person name="Anzenberger F."/>
            <person name="Stierhof Y.-D."/>
            <person name="Geldner N."/>
            <person name="Chory J."/>
            <person name="Schwechheimer C."/>
        </authorList>
    </citation>
    <scope>GENE FAMILY</scope>
    <scope>NOMENCLATURE</scope>
</reference>
<name>AMSH1_ARATH</name>
<evidence type="ECO:0000250" key="1"/>
<evidence type="ECO:0000255" key="2">
    <source>
        <dbReference type="PROSITE-ProRule" id="PRU01182"/>
    </source>
</evidence>
<evidence type="ECO:0000305" key="3"/>